<feature type="chain" id="PRO_0000387039" description="Ribosomal RNA small subunit methyltransferase H">
    <location>
        <begin position="1"/>
        <end position="300"/>
    </location>
</feature>
<feature type="binding site" evidence="1">
    <location>
        <begin position="46"/>
        <end position="48"/>
    </location>
    <ligand>
        <name>S-adenosyl-L-methionine</name>
        <dbReference type="ChEBI" id="CHEBI:59789"/>
    </ligand>
</feature>
<feature type="binding site" evidence="1">
    <location>
        <position position="65"/>
    </location>
    <ligand>
        <name>S-adenosyl-L-methionine</name>
        <dbReference type="ChEBI" id="CHEBI:59789"/>
    </ligand>
</feature>
<feature type="binding site" evidence="1">
    <location>
        <position position="92"/>
    </location>
    <ligand>
        <name>S-adenosyl-L-methionine</name>
        <dbReference type="ChEBI" id="CHEBI:59789"/>
    </ligand>
</feature>
<feature type="binding site" evidence="1">
    <location>
        <position position="107"/>
    </location>
    <ligand>
        <name>S-adenosyl-L-methionine</name>
        <dbReference type="ChEBI" id="CHEBI:59789"/>
    </ligand>
</feature>
<feature type="binding site" evidence="1">
    <location>
        <position position="114"/>
    </location>
    <ligand>
        <name>S-adenosyl-L-methionine</name>
        <dbReference type="ChEBI" id="CHEBI:59789"/>
    </ligand>
</feature>
<proteinExistence type="inferred from homology"/>
<name>RSMH_PROM2</name>
<gene>
    <name evidence="1" type="primary">rsmH</name>
    <name type="synonym">mraW</name>
    <name type="ordered locus">P9215_01891</name>
</gene>
<evidence type="ECO:0000255" key="1">
    <source>
        <dbReference type="HAMAP-Rule" id="MF_01007"/>
    </source>
</evidence>
<dbReference type="EC" id="2.1.1.199" evidence="1"/>
<dbReference type="EMBL" id="CP000825">
    <property type="protein sequence ID" value="ABV49808.1"/>
    <property type="molecule type" value="Genomic_DNA"/>
</dbReference>
<dbReference type="RefSeq" id="WP_012006979.1">
    <property type="nucleotide sequence ID" value="NC_009840.1"/>
</dbReference>
<dbReference type="SMR" id="A8G2H7"/>
<dbReference type="STRING" id="93060.P9215_01891"/>
<dbReference type="KEGG" id="pmh:P9215_01891"/>
<dbReference type="eggNOG" id="COG0275">
    <property type="taxonomic scope" value="Bacteria"/>
</dbReference>
<dbReference type="HOGENOM" id="CLU_038422_3_0_3"/>
<dbReference type="OrthoDB" id="9806637at2"/>
<dbReference type="Proteomes" id="UP000002014">
    <property type="component" value="Chromosome"/>
</dbReference>
<dbReference type="GO" id="GO:0005737">
    <property type="term" value="C:cytoplasm"/>
    <property type="evidence" value="ECO:0007669"/>
    <property type="project" value="UniProtKB-SubCell"/>
</dbReference>
<dbReference type="GO" id="GO:0071424">
    <property type="term" value="F:rRNA (cytosine-N4-)-methyltransferase activity"/>
    <property type="evidence" value="ECO:0007669"/>
    <property type="project" value="UniProtKB-UniRule"/>
</dbReference>
<dbReference type="GO" id="GO:0070475">
    <property type="term" value="P:rRNA base methylation"/>
    <property type="evidence" value="ECO:0007669"/>
    <property type="project" value="UniProtKB-UniRule"/>
</dbReference>
<dbReference type="Gene3D" id="1.10.150.170">
    <property type="entry name" value="Putative methyltransferase TM0872, insert domain"/>
    <property type="match status" value="1"/>
</dbReference>
<dbReference type="Gene3D" id="3.40.50.150">
    <property type="entry name" value="Vaccinia Virus protein VP39"/>
    <property type="match status" value="1"/>
</dbReference>
<dbReference type="HAMAP" id="MF_01007">
    <property type="entry name" value="16SrRNA_methyltr_H"/>
    <property type="match status" value="1"/>
</dbReference>
<dbReference type="InterPro" id="IPR002903">
    <property type="entry name" value="RsmH"/>
</dbReference>
<dbReference type="InterPro" id="IPR023397">
    <property type="entry name" value="SAM-dep_MeTrfase_MraW_recog"/>
</dbReference>
<dbReference type="InterPro" id="IPR029063">
    <property type="entry name" value="SAM-dependent_MTases_sf"/>
</dbReference>
<dbReference type="NCBIfam" id="TIGR00006">
    <property type="entry name" value="16S rRNA (cytosine(1402)-N(4))-methyltransferase RsmH"/>
    <property type="match status" value="1"/>
</dbReference>
<dbReference type="PANTHER" id="PTHR11265:SF0">
    <property type="entry name" value="12S RRNA N4-METHYLCYTIDINE METHYLTRANSFERASE"/>
    <property type="match status" value="1"/>
</dbReference>
<dbReference type="PANTHER" id="PTHR11265">
    <property type="entry name" value="S-ADENOSYL-METHYLTRANSFERASE MRAW"/>
    <property type="match status" value="1"/>
</dbReference>
<dbReference type="Pfam" id="PF01795">
    <property type="entry name" value="Methyltransf_5"/>
    <property type="match status" value="1"/>
</dbReference>
<dbReference type="PIRSF" id="PIRSF004486">
    <property type="entry name" value="MraW"/>
    <property type="match status" value="1"/>
</dbReference>
<dbReference type="SUPFAM" id="SSF81799">
    <property type="entry name" value="Putative methyltransferase TM0872, insert domain"/>
    <property type="match status" value="1"/>
</dbReference>
<dbReference type="SUPFAM" id="SSF53335">
    <property type="entry name" value="S-adenosyl-L-methionine-dependent methyltransferases"/>
    <property type="match status" value="1"/>
</dbReference>
<accession>A8G2H7</accession>
<reference key="1">
    <citation type="journal article" date="2007" name="PLoS Genet.">
        <title>Patterns and implications of gene gain and loss in the evolution of Prochlorococcus.</title>
        <authorList>
            <person name="Kettler G.C."/>
            <person name="Martiny A.C."/>
            <person name="Huang K."/>
            <person name="Zucker J."/>
            <person name="Coleman M.L."/>
            <person name="Rodrigue S."/>
            <person name="Chen F."/>
            <person name="Lapidus A."/>
            <person name="Ferriera S."/>
            <person name="Johnson J."/>
            <person name="Steglich C."/>
            <person name="Church G.M."/>
            <person name="Richardson P."/>
            <person name="Chisholm S.W."/>
        </authorList>
    </citation>
    <scope>NUCLEOTIDE SEQUENCE [LARGE SCALE GENOMIC DNA]</scope>
    <source>
        <strain>MIT 9215</strain>
    </source>
</reference>
<sequence>MQTDLSDSSFFNHKSVMTDEIMASLEHYPLIHNNQLKGIDATLGGGGHSFNLLRKYSELNIIGLDQDPFARISASKKLDEFKNRIDIRASNFADFVPKEKVSFVIADLGVNSNQIDDPKRGFSFQKDGPLDMRMNPLLEVDAEKLIEALNEKDLANLIYKYGDERLSRKIARKIKLDLKENGKYSGTKELAYSIAGCFPPKQRYKKIHPATRTFQALRIAVNKEIEVLEKFLQAVPEWLLPGGIISIISFHSLEDRLVKSSFKNDQRLKNLTKKPITPSEQEVEFNKRARSGKLRIAQLK</sequence>
<protein>
    <recommendedName>
        <fullName evidence="1">Ribosomal RNA small subunit methyltransferase H</fullName>
        <ecNumber evidence="1">2.1.1.199</ecNumber>
    </recommendedName>
    <alternativeName>
        <fullName evidence="1">16S rRNA m(4)C1402 methyltransferase</fullName>
    </alternativeName>
    <alternativeName>
        <fullName evidence="1">rRNA (cytosine-N(4)-)-methyltransferase RsmH</fullName>
    </alternativeName>
</protein>
<keyword id="KW-0963">Cytoplasm</keyword>
<keyword id="KW-0489">Methyltransferase</keyword>
<keyword id="KW-0698">rRNA processing</keyword>
<keyword id="KW-0949">S-adenosyl-L-methionine</keyword>
<keyword id="KW-0808">Transferase</keyword>
<comment type="function">
    <text evidence="1">Specifically methylates the N4 position of cytidine in position 1402 (C1402) of 16S rRNA.</text>
</comment>
<comment type="catalytic activity">
    <reaction evidence="1">
        <text>cytidine(1402) in 16S rRNA + S-adenosyl-L-methionine = N(4)-methylcytidine(1402) in 16S rRNA + S-adenosyl-L-homocysteine + H(+)</text>
        <dbReference type="Rhea" id="RHEA:42928"/>
        <dbReference type="Rhea" id="RHEA-COMP:10286"/>
        <dbReference type="Rhea" id="RHEA-COMP:10287"/>
        <dbReference type="ChEBI" id="CHEBI:15378"/>
        <dbReference type="ChEBI" id="CHEBI:57856"/>
        <dbReference type="ChEBI" id="CHEBI:59789"/>
        <dbReference type="ChEBI" id="CHEBI:74506"/>
        <dbReference type="ChEBI" id="CHEBI:82748"/>
        <dbReference type="EC" id="2.1.1.199"/>
    </reaction>
</comment>
<comment type="subcellular location">
    <subcellularLocation>
        <location evidence="1">Cytoplasm</location>
    </subcellularLocation>
</comment>
<comment type="similarity">
    <text evidence="1">Belongs to the methyltransferase superfamily. RsmH family.</text>
</comment>
<organism>
    <name type="scientific">Prochlorococcus marinus (strain MIT 9215)</name>
    <dbReference type="NCBI Taxonomy" id="93060"/>
    <lineage>
        <taxon>Bacteria</taxon>
        <taxon>Bacillati</taxon>
        <taxon>Cyanobacteriota</taxon>
        <taxon>Cyanophyceae</taxon>
        <taxon>Synechococcales</taxon>
        <taxon>Prochlorococcaceae</taxon>
        <taxon>Prochlorococcus</taxon>
    </lineage>
</organism>